<accession>A7IPQ6</accession>
<sequence length="132" mass="14497">MAVTDPIGDLITRIRNAQMRRKDKTSTPGSRLRASVLEVLRSEGYIRGFTATDHGNGRTEFEIELKYFDGVPVIREIARVSKPGRRVYASVKNLPRVANGLGIAVVSTPQGVMADHEARDKNVGGEVLCTVF</sequence>
<evidence type="ECO:0000255" key="1">
    <source>
        <dbReference type="HAMAP-Rule" id="MF_01302"/>
    </source>
</evidence>
<evidence type="ECO:0000305" key="2"/>
<protein>
    <recommendedName>
        <fullName evidence="1">Small ribosomal subunit protein uS8</fullName>
    </recommendedName>
    <alternativeName>
        <fullName evidence="2">30S ribosomal protein S8</fullName>
    </alternativeName>
</protein>
<name>RS8_XANP2</name>
<gene>
    <name evidence="1" type="primary">rpsH</name>
    <name type="ordered locus">Xaut_4784</name>
</gene>
<dbReference type="EMBL" id="CP000781">
    <property type="protein sequence ID" value="ABS70002.1"/>
    <property type="molecule type" value="Genomic_DNA"/>
</dbReference>
<dbReference type="SMR" id="A7IPQ6"/>
<dbReference type="STRING" id="78245.Xaut_4784"/>
<dbReference type="KEGG" id="xau:Xaut_4784"/>
<dbReference type="eggNOG" id="COG0096">
    <property type="taxonomic scope" value="Bacteria"/>
</dbReference>
<dbReference type="HOGENOM" id="CLU_098428_0_0_5"/>
<dbReference type="OrthoDB" id="9802617at2"/>
<dbReference type="PhylomeDB" id="A7IPQ6"/>
<dbReference type="Proteomes" id="UP000002417">
    <property type="component" value="Chromosome"/>
</dbReference>
<dbReference type="GO" id="GO:1990904">
    <property type="term" value="C:ribonucleoprotein complex"/>
    <property type="evidence" value="ECO:0007669"/>
    <property type="project" value="UniProtKB-KW"/>
</dbReference>
<dbReference type="GO" id="GO:0005840">
    <property type="term" value="C:ribosome"/>
    <property type="evidence" value="ECO:0007669"/>
    <property type="project" value="UniProtKB-KW"/>
</dbReference>
<dbReference type="GO" id="GO:0019843">
    <property type="term" value="F:rRNA binding"/>
    <property type="evidence" value="ECO:0007669"/>
    <property type="project" value="UniProtKB-UniRule"/>
</dbReference>
<dbReference type="GO" id="GO:0003735">
    <property type="term" value="F:structural constituent of ribosome"/>
    <property type="evidence" value="ECO:0007669"/>
    <property type="project" value="InterPro"/>
</dbReference>
<dbReference type="GO" id="GO:0006412">
    <property type="term" value="P:translation"/>
    <property type="evidence" value="ECO:0007669"/>
    <property type="project" value="UniProtKB-UniRule"/>
</dbReference>
<dbReference type="FunFam" id="3.30.1490.10:FF:000001">
    <property type="entry name" value="30S ribosomal protein S8"/>
    <property type="match status" value="1"/>
</dbReference>
<dbReference type="Gene3D" id="3.30.1370.30">
    <property type="match status" value="1"/>
</dbReference>
<dbReference type="Gene3D" id="3.30.1490.10">
    <property type="match status" value="1"/>
</dbReference>
<dbReference type="HAMAP" id="MF_01302_B">
    <property type="entry name" value="Ribosomal_uS8_B"/>
    <property type="match status" value="1"/>
</dbReference>
<dbReference type="InterPro" id="IPR000630">
    <property type="entry name" value="Ribosomal_uS8"/>
</dbReference>
<dbReference type="InterPro" id="IPR047863">
    <property type="entry name" value="Ribosomal_uS8_CS"/>
</dbReference>
<dbReference type="InterPro" id="IPR035987">
    <property type="entry name" value="Ribosomal_uS8_sf"/>
</dbReference>
<dbReference type="NCBIfam" id="NF001109">
    <property type="entry name" value="PRK00136.1"/>
    <property type="match status" value="1"/>
</dbReference>
<dbReference type="PANTHER" id="PTHR11758">
    <property type="entry name" value="40S RIBOSOMAL PROTEIN S15A"/>
    <property type="match status" value="1"/>
</dbReference>
<dbReference type="Pfam" id="PF00410">
    <property type="entry name" value="Ribosomal_S8"/>
    <property type="match status" value="1"/>
</dbReference>
<dbReference type="SUPFAM" id="SSF56047">
    <property type="entry name" value="Ribosomal protein S8"/>
    <property type="match status" value="1"/>
</dbReference>
<dbReference type="PROSITE" id="PS00053">
    <property type="entry name" value="RIBOSOMAL_S8"/>
    <property type="match status" value="1"/>
</dbReference>
<feature type="chain" id="PRO_1000140638" description="Small ribosomal subunit protein uS8">
    <location>
        <begin position="1"/>
        <end position="132"/>
    </location>
</feature>
<comment type="function">
    <text evidence="1">One of the primary rRNA binding proteins, it binds directly to 16S rRNA central domain where it helps coordinate assembly of the platform of the 30S subunit.</text>
</comment>
<comment type="subunit">
    <text evidence="1">Part of the 30S ribosomal subunit. Contacts proteins S5 and S12.</text>
</comment>
<comment type="similarity">
    <text evidence="1">Belongs to the universal ribosomal protein uS8 family.</text>
</comment>
<organism>
    <name type="scientific">Xanthobacter autotrophicus (strain ATCC BAA-1158 / Py2)</name>
    <dbReference type="NCBI Taxonomy" id="78245"/>
    <lineage>
        <taxon>Bacteria</taxon>
        <taxon>Pseudomonadati</taxon>
        <taxon>Pseudomonadota</taxon>
        <taxon>Alphaproteobacteria</taxon>
        <taxon>Hyphomicrobiales</taxon>
        <taxon>Xanthobacteraceae</taxon>
        <taxon>Xanthobacter</taxon>
    </lineage>
</organism>
<reference key="1">
    <citation type="submission" date="2007-07" db="EMBL/GenBank/DDBJ databases">
        <title>Complete sequence of chromosome of Xanthobacter autotrophicus Py2.</title>
        <authorList>
            <consortium name="US DOE Joint Genome Institute"/>
            <person name="Copeland A."/>
            <person name="Lucas S."/>
            <person name="Lapidus A."/>
            <person name="Barry K."/>
            <person name="Glavina del Rio T."/>
            <person name="Hammon N."/>
            <person name="Israni S."/>
            <person name="Dalin E."/>
            <person name="Tice H."/>
            <person name="Pitluck S."/>
            <person name="Sims D."/>
            <person name="Brettin T."/>
            <person name="Bruce D."/>
            <person name="Detter J.C."/>
            <person name="Han C."/>
            <person name="Tapia R."/>
            <person name="Brainard J."/>
            <person name="Schmutz J."/>
            <person name="Larimer F."/>
            <person name="Land M."/>
            <person name="Hauser L."/>
            <person name="Kyrpides N."/>
            <person name="Kim E."/>
            <person name="Ensigns S.A."/>
            <person name="Richardson P."/>
        </authorList>
    </citation>
    <scope>NUCLEOTIDE SEQUENCE [LARGE SCALE GENOMIC DNA]</scope>
    <source>
        <strain>ATCC BAA-1158 / Py2</strain>
    </source>
</reference>
<proteinExistence type="inferred from homology"/>
<keyword id="KW-1185">Reference proteome</keyword>
<keyword id="KW-0687">Ribonucleoprotein</keyword>
<keyword id="KW-0689">Ribosomal protein</keyword>
<keyword id="KW-0694">RNA-binding</keyword>
<keyword id="KW-0699">rRNA-binding</keyword>